<comment type="function">
    <text evidence="2">With S4 and S5 plays an important role in translational accuracy.</text>
</comment>
<comment type="function">
    <text evidence="2">Interacts with and stabilizes bases of the 16S rRNA that are involved in tRNA selection in the A site and with the mRNA backbone. Located at the interface of the 30S and 50S subunits, it traverses the body of the 30S subunit contacting proteins on the other side and probably holding the rRNA structure together. The combined cluster of proteins S8, S12 and S17 appears to hold together the shoulder and platform of the 30S subunit.</text>
</comment>
<comment type="subunit">
    <text evidence="2">Part of the 30S ribosomal subunit. Contacts proteins S8 and S17. May interact with IF1 in the 30S initiation complex.</text>
</comment>
<comment type="similarity">
    <text evidence="2">Belongs to the universal ribosomal protein uS12 family.</text>
</comment>
<dbReference type="EMBL" id="CP000918">
    <property type="protein sequence ID" value="ACO17778.1"/>
    <property type="molecule type" value="Genomic_DNA"/>
</dbReference>
<dbReference type="RefSeq" id="WP_001142332.1">
    <property type="nucleotide sequence ID" value="NC_012468.1"/>
</dbReference>
<dbReference type="SMR" id="C1CB44"/>
<dbReference type="GeneID" id="93922571"/>
<dbReference type="KEGG" id="snm:SP70585_0329"/>
<dbReference type="HOGENOM" id="CLU_104295_1_2_9"/>
<dbReference type="Proteomes" id="UP000002211">
    <property type="component" value="Chromosome"/>
</dbReference>
<dbReference type="GO" id="GO:0015935">
    <property type="term" value="C:small ribosomal subunit"/>
    <property type="evidence" value="ECO:0007669"/>
    <property type="project" value="InterPro"/>
</dbReference>
<dbReference type="GO" id="GO:0019843">
    <property type="term" value="F:rRNA binding"/>
    <property type="evidence" value="ECO:0007669"/>
    <property type="project" value="UniProtKB-UniRule"/>
</dbReference>
<dbReference type="GO" id="GO:0003735">
    <property type="term" value="F:structural constituent of ribosome"/>
    <property type="evidence" value="ECO:0007669"/>
    <property type="project" value="InterPro"/>
</dbReference>
<dbReference type="GO" id="GO:0000049">
    <property type="term" value="F:tRNA binding"/>
    <property type="evidence" value="ECO:0007669"/>
    <property type="project" value="UniProtKB-UniRule"/>
</dbReference>
<dbReference type="GO" id="GO:0006412">
    <property type="term" value="P:translation"/>
    <property type="evidence" value="ECO:0007669"/>
    <property type="project" value="UniProtKB-UniRule"/>
</dbReference>
<dbReference type="CDD" id="cd03368">
    <property type="entry name" value="Ribosomal_S12"/>
    <property type="match status" value="1"/>
</dbReference>
<dbReference type="FunFam" id="2.40.50.140:FF:000001">
    <property type="entry name" value="30S ribosomal protein S12"/>
    <property type="match status" value="1"/>
</dbReference>
<dbReference type="Gene3D" id="2.40.50.140">
    <property type="entry name" value="Nucleic acid-binding proteins"/>
    <property type="match status" value="1"/>
</dbReference>
<dbReference type="HAMAP" id="MF_00403_B">
    <property type="entry name" value="Ribosomal_uS12_B"/>
    <property type="match status" value="1"/>
</dbReference>
<dbReference type="InterPro" id="IPR012340">
    <property type="entry name" value="NA-bd_OB-fold"/>
</dbReference>
<dbReference type="InterPro" id="IPR006032">
    <property type="entry name" value="Ribosomal_uS12"/>
</dbReference>
<dbReference type="InterPro" id="IPR005679">
    <property type="entry name" value="Ribosomal_uS12_bac"/>
</dbReference>
<dbReference type="NCBIfam" id="TIGR00981">
    <property type="entry name" value="rpsL_bact"/>
    <property type="match status" value="1"/>
</dbReference>
<dbReference type="PANTHER" id="PTHR11652">
    <property type="entry name" value="30S RIBOSOMAL PROTEIN S12 FAMILY MEMBER"/>
    <property type="match status" value="1"/>
</dbReference>
<dbReference type="Pfam" id="PF00164">
    <property type="entry name" value="Ribosom_S12_S23"/>
    <property type="match status" value="1"/>
</dbReference>
<dbReference type="PIRSF" id="PIRSF002133">
    <property type="entry name" value="Ribosomal_S12/S23"/>
    <property type="match status" value="1"/>
</dbReference>
<dbReference type="PRINTS" id="PR01034">
    <property type="entry name" value="RIBOSOMALS12"/>
</dbReference>
<dbReference type="SUPFAM" id="SSF50249">
    <property type="entry name" value="Nucleic acid-binding proteins"/>
    <property type="match status" value="1"/>
</dbReference>
<dbReference type="PROSITE" id="PS00055">
    <property type="entry name" value="RIBOSOMAL_S12"/>
    <property type="match status" value="1"/>
</dbReference>
<gene>
    <name evidence="2" type="primary">rpsL</name>
    <name type="ordered locus">SP70585_0329</name>
</gene>
<evidence type="ECO:0000250" key="1"/>
<evidence type="ECO:0000255" key="2">
    <source>
        <dbReference type="HAMAP-Rule" id="MF_00403"/>
    </source>
</evidence>
<evidence type="ECO:0000256" key="3">
    <source>
        <dbReference type="SAM" id="MobiDB-lite"/>
    </source>
</evidence>
<evidence type="ECO:0000305" key="4"/>
<accession>C1CB44</accession>
<proteinExistence type="inferred from homology"/>
<sequence length="137" mass="15144">MPTINQLVRKPRKSKVEKSKSPALNVGYNSHKKVQTNVSSPQKRGVATRVGTMTPKKPNSALRKFARVRLSNLIEVTAYIPGIGHNLQEHSVVLLRGGRVKDLPGVRYHIVRGALDTAGVNDRKQGRSKYGTKRPKA</sequence>
<feature type="chain" id="PRO_1000134656" description="Small ribosomal subunit protein uS12">
    <location>
        <begin position="1"/>
        <end position="137"/>
    </location>
</feature>
<feature type="region of interest" description="Disordered" evidence="3">
    <location>
        <begin position="1"/>
        <end position="57"/>
    </location>
</feature>
<feature type="modified residue" description="3-methylthioaspartic acid" evidence="1">
    <location>
        <position position="102"/>
    </location>
</feature>
<name>RS12_STRP7</name>
<keyword id="KW-0488">Methylation</keyword>
<keyword id="KW-0687">Ribonucleoprotein</keyword>
<keyword id="KW-0689">Ribosomal protein</keyword>
<keyword id="KW-0694">RNA-binding</keyword>
<keyword id="KW-0699">rRNA-binding</keyword>
<keyword id="KW-0820">tRNA-binding</keyword>
<reference key="1">
    <citation type="journal article" date="2010" name="Genome Biol.">
        <title>Structure and dynamics of the pan-genome of Streptococcus pneumoniae and closely related species.</title>
        <authorList>
            <person name="Donati C."/>
            <person name="Hiller N.L."/>
            <person name="Tettelin H."/>
            <person name="Muzzi A."/>
            <person name="Croucher N.J."/>
            <person name="Angiuoli S.V."/>
            <person name="Oggioni M."/>
            <person name="Dunning Hotopp J.C."/>
            <person name="Hu F.Z."/>
            <person name="Riley D.R."/>
            <person name="Covacci A."/>
            <person name="Mitchell T.J."/>
            <person name="Bentley S.D."/>
            <person name="Kilian M."/>
            <person name="Ehrlich G.D."/>
            <person name="Rappuoli R."/>
            <person name="Moxon E.R."/>
            <person name="Masignani V."/>
        </authorList>
    </citation>
    <scope>NUCLEOTIDE SEQUENCE [LARGE SCALE GENOMIC DNA]</scope>
    <source>
        <strain>70585</strain>
    </source>
</reference>
<protein>
    <recommendedName>
        <fullName evidence="2">Small ribosomal subunit protein uS12</fullName>
    </recommendedName>
    <alternativeName>
        <fullName evidence="4">30S ribosomal protein S12</fullName>
    </alternativeName>
</protein>
<organism>
    <name type="scientific">Streptococcus pneumoniae (strain 70585)</name>
    <dbReference type="NCBI Taxonomy" id="488221"/>
    <lineage>
        <taxon>Bacteria</taxon>
        <taxon>Bacillati</taxon>
        <taxon>Bacillota</taxon>
        <taxon>Bacilli</taxon>
        <taxon>Lactobacillales</taxon>
        <taxon>Streptococcaceae</taxon>
        <taxon>Streptococcus</taxon>
    </lineage>
</organism>